<feature type="transit peptide" description="Chloroplast" evidence="2">
    <location>
        <begin position="1"/>
        <end position="46"/>
    </location>
</feature>
<feature type="chain" id="PRO_0000418613" description="Probable sodium/metabolite cotransporter BASS5, chloroplastic">
    <location>
        <begin position="47"/>
        <end position="401"/>
    </location>
</feature>
<feature type="transmembrane region" description="Helical" evidence="2">
    <location>
        <begin position="93"/>
        <end position="113"/>
    </location>
</feature>
<feature type="transmembrane region" description="Helical" evidence="2">
    <location>
        <begin position="122"/>
        <end position="142"/>
    </location>
</feature>
<feature type="transmembrane region" description="Helical" evidence="2">
    <location>
        <begin position="159"/>
        <end position="179"/>
    </location>
</feature>
<feature type="transmembrane region" description="Helical" evidence="2">
    <location>
        <begin position="185"/>
        <end position="205"/>
    </location>
</feature>
<feature type="transmembrane region" description="Helical" evidence="2">
    <location>
        <begin position="215"/>
        <end position="235"/>
    </location>
</feature>
<feature type="transmembrane region" description="Helical" evidence="2">
    <location>
        <begin position="247"/>
        <end position="267"/>
    </location>
</feature>
<feature type="transmembrane region" description="Helical" evidence="2">
    <location>
        <begin position="273"/>
        <end position="293"/>
    </location>
</feature>
<feature type="transmembrane region" description="Helical" evidence="2">
    <location>
        <begin position="299"/>
        <end position="319"/>
    </location>
</feature>
<feature type="transmembrane region" description="Helical" evidence="2">
    <location>
        <begin position="372"/>
        <end position="392"/>
    </location>
</feature>
<gene>
    <name type="primary">BASS5</name>
    <name type="ordered locus">Os09g0520600</name>
    <name type="ordered locus">LOC_Os09g34900</name>
    <name type="ORF">OsJ_30046</name>
    <name type="ORF">P0669G04.12</name>
</gene>
<organism>
    <name type="scientific">Oryza sativa subsp. japonica</name>
    <name type="common">Rice</name>
    <dbReference type="NCBI Taxonomy" id="39947"/>
    <lineage>
        <taxon>Eukaryota</taxon>
        <taxon>Viridiplantae</taxon>
        <taxon>Streptophyta</taxon>
        <taxon>Embryophyta</taxon>
        <taxon>Tracheophyta</taxon>
        <taxon>Spermatophyta</taxon>
        <taxon>Magnoliopsida</taxon>
        <taxon>Liliopsida</taxon>
        <taxon>Poales</taxon>
        <taxon>Poaceae</taxon>
        <taxon>BOP clade</taxon>
        <taxon>Oryzoideae</taxon>
        <taxon>Oryzeae</taxon>
        <taxon>Oryzinae</taxon>
        <taxon>Oryza</taxon>
        <taxon>Oryza sativa</taxon>
    </lineage>
</organism>
<reference key="1">
    <citation type="journal article" date="2005" name="Nature">
        <title>The map-based sequence of the rice genome.</title>
        <authorList>
            <consortium name="International rice genome sequencing project (IRGSP)"/>
        </authorList>
    </citation>
    <scope>NUCLEOTIDE SEQUENCE [LARGE SCALE GENOMIC DNA]</scope>
    <source>
        <strain>cv. Nipponbare</strain>
    </source>
</reference>
<reference key="2">
    <citation type="journal article" date="2008" name="Nucleic Acids Res.">
        <title>The rice annotation project database (RAP-DB): 2008 update.</title>
        <authorList>
            <consortium name="The rice annotation project (RAP)"/>
        </authorList>
    </citation>
    <scope>GENOME REANNOTATION</scope>
    <source>
        <strain>cv. Nipponbare</strain>
    </source>
</reference>
<reference key="3">
    <citation type="journal article" date="2013" name="Rice">
        <title>Improvement of the Oryza sativa Nipponbare reference genome using next generation sequence and optical map data.</title>
        <authorList>
            <person name="Kawahara Y."/>
            <person name="de la Bastide M."/>
            <person name="Hamilton J.P."/>
            <person name="Kanamori H."/>
            <person name="McCombie W.R."/>
            <person name="Ouyang S."/>
            <person name="Schwartz D.C."/>
            <person name="Tanaka T."/>
            <person name="Wu J."/>
            <person name="Zhou S."/>
            <person name="Childs K.L."/>
            <person name="Davidson R.M."/>
            <person name="Lin H."/>
            <person name="Quesada-Ocampo L."/>
            <person name="Vaillancourt B."/>
            <person name="Sakai H."/>
            <person name="Lee S.S."/>
            <person name="Kim J."/>
            <person name="Numa H."/>
            <person name="Itoh T."/>
            <person name="Buell C.R."/>
            <person name="Matsumoto T."/>
        </authorList>
    </citation>
    <scope>GENOME REANNOTATION</scope>
    <source>
        <strain>cv. Nipponbare</strain>
    </source>
</reference>
<reference key="4">
    <citation type="journal article" date="2005" name="PLoS Biol.">
        <title>The genomes of Oryza sativa: a history of duplications.</title>
        <authorList>
            <person name="Yu J."/>
            <person name="Wang J."/>
            <person name="Lin W."/>
            <person name="Li S."/>
            <person name="Li H."/>
            <person name="Zhou J."/>
            <person name="Ni P."/>
            <person name="Dong W."/>
            <person name="Hu S."/>
            <person name="Zeng C."/>
            <person name="Zhang J."/>
            <person name="Zhang Y."/>
            <person name="Li R."/>
            <person name="Xu Z."/>
            <person name="Li S."/>
            <person name="Li X."/>
            <person name="Zheng H."/>
            <person name="Cong L."/>
            <person name="Lin L."/>
            <person name="Yin J."/>
            <person name="Geng J."/>
            <person name="Li G."/>
            <person name="Shi J."/>
            <person name="Liu J."/>
            <person name="Lv H."/>
            <person name="Li J."/>
            <person name="Wang J."/>
            <person name="Deng Y."/>
            <person name="Ran L."/>
            <person name="Shi X."/>
            <person name="Wang X."/>
            <person name="Wu Q."/>
            <person name="Li C."/>
            <person name="Ren X."/>
            <person name="Wang J."/>
            <person name="Wang X."/>
            <person name="Li D."/>
            <person name="Liu D."/>
            <person name="Zhang X."/>
            <person name="Ji Z."/>
            <person name="Zhao W."/>
            <person name="Sun Y."/>
            <person name="Zhang Z."/>
            <person name="Bao J."/>
            <person name="Han Y."/>
            <person name="Dong L."/>
            <person name="Ji J."/>
            <person name="Chen P."/>
            <person name="Wu S."/>
            <person name="Liu J."/>
            <person name="Xiao Y."/>
            <person name="Bu D."/>
            <person name="Tan J."/>
            <person name="Yang L."/>
            <person name="Ye C."/>
            <person name="Zhang J."/>
            <person name="Xu J."/>
            <person name="Zhou Y."/>
            <person name="Yu Y."/>
            <person name="Zhang B."/>
            <person name="Zhuang S."/>
            <person name="Wei H."/>
            <person name="Liu B."/>
            <person name="Lei M."/>
            <person name="Yu H."/>
            <person name="Li Y."/>
            <person name="Xu H."/>
            <person name="Wei S."/>
            <person name="He X."/>
            <person name="Fang L."/>
            <person name="Zhang Z."/>
            <person name="Zhang Y."/>
            <person name="Huang X."/>
            <person name="Su Z."/>
            <person name="Tong W."/>
            <person name="Li J."/>
            <person name="Tong Z."/>
            <person name="Li S."/>
            <person name="Ye J."/>
            <person name="Wang L."/>
            <person name="Fang L."/>
            <person name="Lei T."/>
            <person name="Chen C.-S."/>
            <person name="Chen H.-C."/>
            <person name="Xu Z."/>
            <person name="Li H."/>
            <person name="Huang H."/>
            <person name="Zhang F."/>
            <person name="Xu H."/>
            <person name="Li N."/>
            <person name="Zhao C."/>
            <person name="Li S."/>
            <person name="Dong L."/>
            <person name="Huang Y."/>
            <person name="Li L."/>
            <person name="Xi Y."/>
            <person name="Qi Q."/>
            <person name="Li W."/>
            <person name="Zhang B."/>
            <person name="Hu W."/>
            <person name="Zhang Y."/>
            <person name="Tian X."/>
            <person name="Jiao Y."/>
            <person name="Liang X."/>
            <person name="Jin J."/>
            <person name="Gao L."/>
            <person name="Zheng W."/>
            <person name="Hao B."/>
            <person name="Liu S.-M."/>
            <person name="Wang W."/>
            <person name="Yuan L."/>
            <person name="Cao M."/>
            <person name="McDermott J."/>
            <person name="Samudrala R."/>
            <person name="Wang J."/>
            <person name="Wong G.K.-S."/>
            <person name="Yang H."/>
        </authorList>
    </citation>
    <scope>NUCLEOTIDE SEQUENCE [LARGE SCALE GENOMIC DNA]</scope>
    <source>
        <strain>cv. Nipponbare</strain>
    </source>
</reference>
<reference key="5">
    <citation type="journal article" date="2003" name="Science">
        <title>Collection, mapping, and annotation of over 28,000 cDNA clones from japonica rice.</title>
        <authorList>
            <consortium name="The rice full-length cDNA consortium"/>
        </authorList>
    </citation>
    <scope>NUCLEOTIDE SEQUENCE [LARGE SCALE MRNA]</scope>
    <source>
        <strain>cv. Nipponbare</strain>
    </source>
</reference>
<proteinExistence type="evidence at transcript level"/>
<name>BASS5_ORYSJ</name>
<evidence type="ECO:0000250" key="1"/>
<evidence type="ECO:0000255" key="2"/>
<evidence type="ECO:0000305" key="3"/>
<accession>Q650U0</accession>
<accession>A0A0P0XP36</accession>
<dbReference type="EMBL" id="AP006175">
    <property type="protein sequence ID" value="BAD46677.1"/>
    <property type="molecule type" value="Genomic_DNA"/>
</dbReference>
<dbReference type="EMBL" id="AP008215">
    <property type="protein sequence ID" value="BAF25615.1"/>
    <property type="molecule type" value="Genomic_DNA"/>
</dbReference>
<dbReference type="EMBL" id="AP014965">
    <property type="protein sequence ID" value="BAT09009.1"/>
    <property type="molecule type" value="Genomic_DNA"/>
</dbReference>
<dbReference type="EMBL" id="CM000146">
    <property type="protein sequence ID" value="EEE70066.1"/>
    <property type="molecule type" value="Genomic_DNA"/>
</dbReference>
<dbReference type="EMBL" id="AK101895">
    <property type="protein sequence ID" value="BAG95277.1"/>
    <property type="molecule type" value="mRNA"/>
</dbReference>
<dbReference type="RefSeq" id="XP_015612294.1">
    <property type="nucleotide sequence ID" value="XM_015756808.1"/>
</dbReference>
<dbReference type="SMR" id="Q650U0"/>
<dbReference type="FunCoup" id="Q650U0">
    <property type="interactions" value="340"/>
</dbReference>
<dbReference type="STRING" id="39947.Q650U0"/>
<dbReference type="PaxDb" id="39947-Q650U0"/>
<dbReference type="EnsemblPlants" id="Os09t0520600-01">
    <property type="protein sequence ID" value="Os09t0520600-01"/>
    <property type="gene ID" value="Os09g0520600"/>
</dbReference>
<dbReference type="Gramene" id="Os09t0520600-01">
    <property type="protein sequence ID" value="Os09t0520600-01"/>
    <property type="gene ID" value="Os09g0520600"/>
</dbReference>
<dbReference type="KEGG" id="dosa:Os09g0520600"/>
<dbReference type="eggNOG" id="KOG2718">
    <property type="taxonomic scope" value="Eukaryota"/>
</dbReference>
<dbReference type="HOGENOM" id="CLU_034788_3_1_1"/>
<dbReference type="InParanoid" id="Q650U0"/>
<dbReference type="OMA" id="PLAMNIN"/>
<dbReference type="OrthoDB" id="203097at2759"/>
<dbReference type="Proteomes" id="UP000000763">
    <property type="component" value="Chromosome 9"/>
</dbReference>
<dbReference type="Proteomes" id="UP000007752">
    <property type="component" value="Chromosome 9"/>
</dbReference>
<dbReference type="Proteomes" id="UP000059680">
    <property type="component" value="Chromosome 9"/>
</dbReference>
<dbReference type="GO" id="GO:0009941">
    <property type="term" value="C:chloroplast envelope"/>
    <property type="evidence" value="ECO:0007669"/>
    <property type="project" value="UniProtKB-SubCell"/>
</dbReference>
<dbReference type="GO" id="GO:0016020">
    <property type="term" value="C:membrane"/>
    <property type="evidence" value="ECO:0007669"/>
    <property type="project" value="UniProtKB-SubCell"/>
</dbReference>
<dbReference type="Gene3D" id="1.20.1530.20">
    <property type="match status" value="1"/>
</dbReference>
<dbReference type="InterPro" id="IPR002657">
    <property type="entry name" value="BilAc:Na_symport/Acr3"/>
</dbReference>
<dbReference type="InterPro" id="IPR004710">
    <property type="entry name" value="Bilac:Na_transpt"/>
</dbReference>
<dbReference type="InterPro" id="IPR038770">
    <property type="entry name" value="Na+/solute_symporter_sf"/>
</dbReference>
<dbReference type="PANTHER" id="PTHR10361">
    <property type="entry name" value="SODIUM-BILE ACID COTRANSPORTER"/>
    <property type="match status" value="1"/>
</dbReference>
<dbReference type="PANTHER" id="PTHR10361:SF30">
    <property type="entry name" value="SODIUM_METABOLITE COTRANSPORTER BASS6, CHLOROPLASTIC-RELATED"/>
    <property type="match status" value="1"/>
</dbReference>
<dbReference type="Pfam" id="PF01758">
    <property type="entry name" value="SBF"/>
    <property type="match status" value="1"/>
</dbReference>
<keyword id="KW-0150">Chloroplast</keyword>
<keyword id="KW-0472">Membrane</keyword>
<keyword id="KW-0934">Plastid</keyword>
<keyword id="KW-1185">Reference proteome</keyword>
<keyword id="KW-0809">Transit peptide</keyword>
<keyword id="KW-0812">Transmembrane</keyword>
<keyword id="KW-1133">Transmembrane helix</keyword>
<keyword id="KW-0813">Transport</keyword>
<protein>
    <recommendedName>
        <fullName>Probable sodium/metabolite cotransporter BASS5, chloroplastic</fullName>
    </recommendedName>
    <alternativeName>
        <fullName>Bile acid-sodium symporter family protein 5</fullName>
    </alternativeName>
</protein>
<comment type="function">
    <text evidence="1">May function as sodium-coupled metabolite transporter across the chloroplast envelope.</text>
</comment>
<comment type="subcellular location">
    <subcellularLocation>
        <location evidence="3">Membrane</location>
        <topology evidence="3">Multi-pass membrane protein</topology>
    </subcellularLocation>
    <subcellularLocation>
        <location evidence="3">Plastid</location>
        <location evidence="3">Chloroplast envelope</location>
    </subcellularLocation>
</comment>
<comment type="similarity">
    <text evidence="3">Belongs to the bile acid:sodium symporter (BASS) (TC 2.A.28) family.</text>
</comment>
<sequence length="401" mass="42771">MAPNAAVLVRPHIAGVHHLPTGRRLPRLAPPQAVSPPFSRQKGSVVAASGRVWASASGSFEKDRIGDDDVLASPQIVEESKVDLLKILKSANTIIPHVVLGSTILALVYPPSFTWFTTRYYAPALGFLMFAVGVNSSVKDFIEAIQRPDAIAAGYVGQFIIKPFLGFLFGTLAVTIFNLPTALGAGIMLVSCVSGAQLSNYATFLTDPHMAPLSIVMTSLSTATAVFVTPTLSYFLIGKKLPVDVKGMMSSIVQIVVAPIAAGLLLNRYLPRLCSAIQPFLPPLSVFVTALCVGSPLAINIKAVLSPFGLATVLLLFAFHTSSFIAGYHLAGTWFRESADVKALQRTVSFETGMQSSLLALALANRFFPDPLVGVPPAISVVLMSLMGFALVMVWSKRTKE</sequence>